<keyword id="KW-0007">Acetylation</keyword>
<keyword id="KW-0158">Chromosome</keyword>
<keyword id="KW-0238">DNA-binding</keyword>
<keyword id="KW-0488">Methylation</keyword>
<keyword id="KW-0544">Nucleosome core</keyword>
<keyword id="KW-0539">Nucleus</keyword>
<accession>P84049</accession>
<accession>P02307</accession>
<accession>Q9VFH7</accession>
<protein>
    <recommendedName>
        <fullName>Histone H4</fullName>
    </recommendedName>
</protein>
<dbReference type="EMBL" id="X91514">
    <property type="protein sequence ID" value="CAA62814.1"/>
    <property type="molecule type" value="mRNA"/>
</dbReference>
<dbReference type="SMR" id="P84049"/>
<dbReference type="GO" id="GO:0000786">
    <property type="term" value="C:nucleosome"/>
    <property type="evidence" value="ECO:0000250"/>
    <property type="project" value="UniProtKB"/>
</dbReference>
<dbReference type="GO" id="GO:0005634">
    <property type="term" value="C:nucleus"/>
    <property type="evidence" value="ECO:0007669"/>
    <property type="project" value="UniProtKB-SubCell"/>
</dbReference>
<dbReference type="GO" id="GO:0003677">
    <property type="term" value="F:DNA binding"/>
    <property type="evidence" value="ECO:0000250"/>
    <property type="project" value="UniProtKB"/>
</dbReference>
<dbReference type="GO" id="GO:0046982">
    <property type="term" value="F:protein heterodimerization activity"/>
    <property type="evidence" value="ECO:0007669"/>
    <property type="project" value="InterPro"/>
</dbReference>
<dbReference type="GO" id="GO:0030527">
    <property type="term" value="F:structural constituent of chromatin"/>
    <property type="evidence" value="ECO:0007669"/>
    <property type="project" value="InterPro"/>
</dbReference>
<dbReference type="GO" id="GO:0006334">
    <property type="term" value="P:nucleosome assembly"/>
    <property type="evidence" value="ECO:0000250"/>
    <property type="project" value="UniProtKB"/>
</dbReference>
<dbReference type="CDD" id="cd22912">
    <property type="entry name" value="HFD_H4"/>
    <property type="match status" value="1"/>
</dbReference>
<dbReference type="FunFam" id="1.10.20.10:FF:000002">
    <property type="entry name" value="Histone H4"/>
    <property type="match status" value="1"/>
</dbReference>
<dbReference type="Gene3D" id="1.10.20.10">
    <property type="entry name" value="Histone, subunit A"/>
    <property type="match status" value="1"/>
</dbReference>
<dbReference type="InterPro" id="IPR035425">
    <property type="entry name" value="CENP-T/H4_C"/>
</dbReference>
<dbReference type="InterPro" id="IPR009072">
    <property type="entry name" value="Histone-fold"/>
</dbReference>
<dbReference type="InterPro" id="IPR001951">
    <property type="entry name" value="Histone_H4"/>
</dbReference>
<dbReference type="InterPro" id="IPR019809">
    <property type="entry name" value="Histone_H4_CS"/>
</dbReference>
<dbReference type="InterPro" id="IPR004823">
    <property type="entry name" value="TAF_TATA-bd_Histone-like_dom"/>
</dbReference>
<dbReference type="PANTHER" id="PTHR10484">
    <property type="entry name" value="HISTONE H4"/>
    <property type="match status" value="1"/>
</dbReference>
<dbReference type="Pfam" id="PF15511">
    <property type="entry name" value="CENP-T_C"/>
    <property type="match status" value="1"/>
</dbReference>
<dbReference type="PRINTS" id="PR00623">
    <property type="entry name" value="HISTONEH4"/>
</dbReference>
<dbReference type="SMART" id="SM00417">
    <property type="entry name" value="H4"/>
    <property type="match status" value="1"/>
</dbReference>
<dbReference type="SMART" id="SM00803">
    <property type="entry name" value="TAF"/>
    <property type="match status" value="1"/>
</dbReference>
<dbReference type="SUPFAM" id="SSF47113">
    <property type="entry name" value="Histone-fold"/>
    <property type="match status" value="1"/>
</dbReference>
<dbReference type="PROSITE" id="PS00047">
    <property type="entry name" value="HISTONE_H4"/>
    <property type="match status" value="1"/>
</dbReference>
<organism>
    <name type="scientific">Myrmica ruginodis</name>
    <name type="common">Red ant</name>
    <dbReference type="NCBI Taxonomy" id="34708"/>
    <lineage>
        <taxon>Eukaryota</taxon>
        <taxon>Metazoa</taxon>
        <taxon>Ecdysozoa</taxon>
        <taxon>Arthropoda</taxon>
        <taxon>Hexapoda</taxon>
        <taxon>Insecta</taxon>
        <taxon>Pterygota</taxon>
        <taxon>Neoptera</taxon>
        <taxon>Endopterygota</taxon>
        <taxon>Hymenoptera</taxon>
        <taxon>Apocrita</taxon>
        <taxon>Aculeata</taxon>
        <taxon>Formicoidea</taxon>
        <taxon>Formicidae</taxon>
        <taxon>Myrmicinae</taxon>
        <taxon>Myrmica</taxon>
    </lineage>
</organism>
<name>H4_MYRRU</name>
<gene>
    <name type="primary">His4</name>
    <name type="synonym">H4</name>
</gene>
<reference key="1">
    <citation type="submission" date="1995-09" db="EMBL/GenBank/DDBJ databases">
        <title>Fast cloning and sequencing of histone H4 and actin messenger RNA fragments and their uses as control.</title>
        <authorList>
            <person name="Hamelin E."/>
            <person name="Bigot Y.Y.B."/>
            <person name="Rouleux F."/>
            <person name="Renault S."/>
            <person name="Periquet G."/>
        </authorList>
    </citation>
    <scope>NUCLEOTIDE SEQUENCE [MRNA]</scope>
</reference>
<evidence type="ECO:0000250" key="1"/>
<evidence type="ECO:0000250" key="2">
    <source>
        <dbReference type="UniProtKB" id="P62805"/>
    </source>
</evidence>
<evidence type="ECO:0000256" key="3">
    <source>
        <dbReference type="SAM" id="MobiDB-lite"/>
    </source>
</evidence>
<evidence type="ECO:0000305" key="4"/>
<sequence length="103" mass="11381">MTGRGKGGKGLGKGGAKRHRKVLRDNIQGITKPAIRRLARRGGVKRISGLIYEETRGVLKVFLENVIRDAVTYTEHAKRKTVTAMDVVYALKRQGRTLYGFGG</sequence>
<comment type="function">
    <text>Core component of nucleosome. Nucleosomes wrap and compact DNA into chromatin, limiting DNA accessibility to the cellular machineries which require DNA as a template. Histones thereby play a central role in transcription regulation, DNA repair, DNA replication and chromosomal stability. DNA accessibility is regulated via a complex set of post-translational modifications of histones, also called histone code, and nucleosome remodeling.</text>
</comment>
<comment type="subunit">
    <text>The nucleosome is a histone octamer containing two molecules each of H2A, H2B, H3 and H4 assembled in one H3-H4 heterotetramer and two H2A-H2B heterodimers. The octamer wraps approximately 147 bp of DNA.</text>
</comment>
<comment type="subcellular location">
    <subcellularLocation>
        <location evidence="1">Nucleus</location>
    </subcellularLocation>
    <subcellularLocation>
        <location evidence="1">Chromosome</location>
    </subcellularLocation>
</comment>
<comment type="similarity">
    <text evidence="4">Belongs to the histone H4 family.</text>
</comment>
<proteinExistence type="inferred from homology"/>
<feature type="initiator methionine" description="Removed" evidence="1">
    <location>
        <position position="1"/>
    </location>
</feature>
<feature type="chain" id="PRO_0000158330" description="Histone H4">
    <location>
        <begin position="2"/>
        <end position="103"/>
    </location>
</feature>
<feature type="DNA-binding region">
    <location>
        <begin position="17"/>
        <end position="21"/>
    </location>
</feature>
<feature type="region of interest" description="Disordered" evidence="3">
    <location>
        <begin position="1"/>
        <end position="20"/>
    </location>
</feature>
<feature type="compositionally biased region" description="Gly residues" evidence="3">
    <location>
        <begin position="1"/>
        <end position="14"/>
    </location>
</feature>
<feature type="modified residue" description="N6-acetyl-N6-methyllysine; alternate" evidence="2">
    <location>
        <position position="6"/>
    </location>
</feature>
<feature type="modified residue" description="N6-acetyl-N6-methyllysine; alternate" evidence="2">
    <location>
        <position position="13"/>
    </location>
</feature>